<accession>A0A1D8PH52</accession>
<organism>
    <name type="scientific">Candida albicans (strain SC5314 / ATCC MYA-2876)</name>
    <name type="common">Yeast</name>
    <dbReference type="NCBI Taxonomy" id="237561"/>
    <lineage>
        <taxon>Eukaryota</taxon>
        <taxon>Fungi</taxon>
        <taxon>Dikarya</taxon>
        <taxon>Ascomycota</taxon>
        <taxon>Saccharomycotina</taxon>
        <taxon>Pichiomycetes</taxon>
        <taxon>Debaryomycetaceae</taxon>
        <taxon>Candida/Lodderomyces clade</taxon>
        <taxon>Candida</taxon>
    </lineage>
</organism>
<sequence>MVPPVYIVSTARTPIGSFQGTLSSLTYSDLGAHAVKAALNKVPQIKPEDVDEIVFGGVLQANVGQAPARQVALKAGLTDKIVASTVNKVCASGLKAIIIGAQNIICGTSDIVVVGGAESMTNTPYYLPTARNGARFGDSTLIDGIQKDGLLDVYEQKLMGVAAEKCAADHGFTREQQDEFAIKSYQKAGNALKQGKFNQEIAPVTIKGVRGKPDVVVEKDEEIEKFNEAKLKSARAVFQKENGTVTGPNASKINDGAAALILVSEAKLKELGLKPLAKINGWGEAARNPIDFTIAPALAVPKAVKHAGLTLDQVDFFELNEAFSVVGLANAEICQIPLEKLNAYGGAVALGHPLGCSGARIVVTLLSVLIQEGGKIGCAGVCNGGGGASSIVIEKVDSDFKL</sequence>
<proteinExistence type="evidence at transcript level"/>
<dbReference type="EC" id="2.3.1.9" evidence="2"/>
<dbReference type="EMBL" id="CP017624">
    <property type="protein sequence ID" value="AOW27457.1"/>
    <property type="molecule type" value="Genomic_DNA"/>
</dbReference>
<dbReference type="RefSeq" id="XP_710124.1">
    <property type="nucleotide sequence ID" value="XM_705032.1"/>
</dbReference>
<dbReference type="SMR" id="A0A1D8PH52"/>
<dbReference type="FunCoup" id="A0A1D8PH52">
    <property type="interactions" value="628"/>
</dbReference>
<dbReference type="STRING" id="237561.A0A1D8PH52"/>
<dbReference type="EnsemblFungi" id="C2_04310W_A-T">
    <property type="protein sequence ID" value="C2_04310W_A-T-p1"/>
    <property type="gene ID" value="C2_04310W_A"/>
</dbReference>
<dbReference type="GeneID" id="3648275"/>
<dbReference type="KEGG" id="cal:CAALFM_C204310WA"/>
<dbReference type="CGD" id="CAL0000184591">
    <property type="gene designation" value="ERG10"/>
</dbReference>
<dbReference type="VEuPathDB" id="FungiDB:C2_04310W_A"/>
<dbReference type="eggNOG" id="KOG1390">
    <property type="taxonomic scope" value="Eukaryota"/>
</dbReference>
<dbReference type="InParanoid" id="A0A1D8PH52"/>
<dbReference type="OMA" id="ICPSIAI"/>
<dbReference type="OrthoDB" id="5404651at2759"/>
<dbReference type="UniPathway" id="UPA00058">
    <property type="reaction ID" value="UER00101"/>
</dbReference>
<dbReference type="Proteomes" id="UP000000559">
    <property type="component" value="Chromosome 2"/>
</dbReference>
<dbReference type="GO" id="GO:0005829">
    <property type="term" value="C:cytosol"/>
    <property type="evidence" value="ECO:0007669"/>
    <property type="project" value="UniProtKB-SubCell"/>
</dbReference>
<dbReference type="GO" id="GO:0005739">
    <property type="term" value="C:mitochondrion"/>
    <property type="evidence" value="ECO:0000318"/>
    <property type="project" value="GO_Central"/>
</dbReference>
<dbReference type="GO" id="GO:0003985">
    <property type="term" value="F:acetyl-CoA C-acetyltransferase activity"/>
    <property type="evidence" value="ECO:0000318"/>
    <property type="project" value="GO_Central"/>
</dbReference>
<dbReference type="GO" id="GO:0046872">
    <property type="term" value="F:metal ion binding"/>
    <property type="evidence" value="ECO:0007669"/>
    <property type="project" value="UniProtKB-KW"/>
</dbReference>
<dbReference type="GO" id="GO:0006696">
    <property type="term" value="P:ergosterol biosynthetic process"/>
    <property type="evidence" value="ECO:0000318"/>
    <property type="project" value="GO_Central"/>
</dbReference>
<dbReference type="CDD" id="cd00751">
    <property type="entry name" value="thiolase"/>
    <property type="match status" value="1"/>
</dbReference>
<dbReference type="FunFam" id="3.40.47.10:FF:000007">
    <property type="entry name" value="acetyl-CoA acetyltransferase, mitochondrial"/>
    <property type="match status" value="1"/>
</dbReference>
<dbReference type="Gene3D" id="3.40.47.10">
    <property type="match status" value="1"/>
</dbReference>
<dbReference type="InterPro" id="IPR002155">
    <property type="entry name" value="Thiolase"/>
</dbReference>
<dbReference type="InterPro" id="IPR016039">
    <property type="entry name" value="Thiolase-like"/>
</dbReference>
<dbReference type="InterPro" id="IPR020615">
    <property type="entry name" value="Thiolase_acyl_enz_int_AS"/>
</dbReference>
<dbReference type="InterPro" id="IPR020617">
    <property type="entry name" value="Thiolase_C"/>
</dbReference>
<dbReference type="InterPro" id="IPR020613">
    <property type="entry name" value="Thiolase_CS"/>
</dbReference>
<dbReference type="InterPro" id="IPR020616">
    <property type="entry name" value="Thiolase_N"/>
</dbReference>
<dbReference type="NCBIfam" id="TIGR01930">
    <property type="entry name" value="AcCoA-C-Actrans"/>
    <property type="match status" value="1"/>
</dbReference>
<dbReference type="PANTHER" id="PTHR18919:SF165">
    <property type="entry name" value="ACETYL-COA ACETYLTRANSFERASE"/>
    <property type="match status" value="1"/>
</dbReference>
<dbReference type="PANTHER" id="PTHR18919">
    <property type="entry name" value="ACETYL-COA C-ACYLTRANSFERASE"/>
    <property type="match status" value="1"/>
</dbReference>
<dbReference type="Pfam" id="PF02803">
    <property type="entry name" value="Thiolase_C"/>
    <property type="match status" value="1"/>
</dbReference>
<dbReference type="Pfam" id="PF00108">
    <property type="entry name" value="Thiolase_N"/>
    <property type="match status" value="1"/>
</dbReference>
<dbReference type="PIRSF" id="PIRSF000429">
    <property type="entry name" value="Ac-CoA_Ac_transf"/>
    <property type="match status" value="1"/>
</dbReference>
<dbReference type="SUPFAM" id="SSF53901">
    <property type="entry name" value="Thiolase-like"/>
    <property type="match status" value="2"/>
</dbReference>
<dbReference type="PROSITE" id="PS00098">
    <property type="entry name" value="THIOLASE_1"/>
    <property type="match status" value="1"/>
</dbReference>
<dbReference type="PROSITE" id="PS00737">
    <property type="entry name" value="THIOLASE_2"/>
    <property type="match status" value="1"/>
</dbReference>
<reference key="1">
    <citation type="journal article" date="2004" name="Proc. Natl. Acad. Sci. U.S.A.">
        <title>The diploid genome sequence of Candida albicans.</title>
        <authorList>
            <person name="Jones T."/>
            <person name="Federspiel N.A."/>
            <person name="Chibana H."/>
            <person name="Dungan J."/>
            <person name="Kalman S."/>
            <person name="Magee B.B."/>
            <person name="Newport G."/>
            <person name="Thorstenson Y.R."/>
            <person name="Agabian N."/>
            <person name="Magee P.T."/>
            <person name="Davis R.W."/>
            <person name="Scherer S."/>
        </authorList>
    </citation>
    <scope>NUCLEOTIDE SEQUENCE [LARGE SCALE GENOMIC DNA]</scope>
    <source>
        <strain>SC5314 / ATCC MYA-2876</strain>
    </source>
</reference>
<reference key="2">
    <citation type="journal article" date="2007" name="Genome Biol.">
        <title>Assembly of the Candida albicans genome into sixteen supercontigs aligned on the eight chromosomes.</title>
        <authorList>
            <person name="van het Hoog M."/>
            <person name="Rast T.J."/>
            <person name="Martchenko M."/>
            <person name="Grindle S."/>
            <person name="Dignard D."/>
            <person name="Hogues H."/>
            <person name="Cuomo C."/>
            <person name="Berriman M."/>
            <person name="Scherer S."/>
            <person name="Magee B.B."/>
            <person name="Whiteway M."/>
            <person name="Chibana H."/>
            <person name="Nantel A."/>
            <person name="Magee P.T."/>
        </authorList>
    </citation>
    <scope>GENOME REANNOTATION</scope>
    <source>
        <strain>SC5314 / ATCC MYA-2876</strain>
    </source>
</reference>
<reference key="3">
    <citation type="journal article" date="2013" name="Genome Biol.">
        <title>Assembly of a phased diploid Candida albicans genome facilitates allele-specific measurements and provides a simple model for repeat and indel structure.</title>
        <authorList>
            <person name="Muzzey D."/>
            <person name="Schwartz K."/>
            <person name="Weissman J.S."/>
            <person name="Sherlock G."/>
        </authorList>
    </citation>
    <scope>NUCLEOTIDE SEQUENCE [LARGE SCALE GENOMIC DNA]</scope>
    <scope>GENOME REANNOTATION</scope>
    <source>
        <strain>SC5314 / ATCC MYA-2876</strain>
    </source>
</reference>
<reference key="4">
    <citation type="journal article" date="2001" name="Antimicrob. Agents Chemother.">
        <title>Genomic profiling of the response of Candida albicans to itraconazole treatment using a DNA microarray.</title>
        <authorList>
            <person name="De Backer M.D."/>
            <person name="Ilyina T."/>
            <person name="Ma X.J."/>
            <person name="Vandoninck S."/>
            <person name="Luyten W.H."/>
            <person name="Vanden Bossche H."/>
        </authorList>
    </citation>
    <scope>INDUCTION</scope>
</reference>
<reference key="5">
    <citation type="journal article" date="2003" name="Med. Mycol.">
        <title>Antifungal activity of fluconazole in combination with lovastatin and their effects on gene expression in the ergosterol and prenylation pathways in Candida albicans.</title>
        <authorList>
            <person name="Song J.L."/>
            <person name="Lyons C.N."/>
            <person name="Holleman S."/>
            <person name="Oliver B.G."/>
            <person name="White T.C."/>
        </authorList>
    </citation>
    <scope>FUNCTION</scope>
</reference>
<reference key="6">
    <citation type="journal article" date="2004" name="Antimicrob. Agents Chemother.">
        <title>Proteomic analysis of azole resistance in Candida albicans clinical isolates.</title>
        <authorList>
            <person name="Hooshdaran M.Z."/>
            <person name="Barker K.S."/>
            <person name="Hilliard G.M."/>
            <person name="Kusch H."/>
            <person name="Morschhaeuser J."/>
            <person name="Rogers P.D."/>
        </authorList>
    </citation>
    <scope>INDUCTION</scope>
</reference>
<reference key="7">
    <citation type="journal article" date="2005" name="J. Antimicrob. Chemother.">
        <title>Exposure of Candida albicans to antifungal agents affects expression of SAP2 and SAP9 secreted proteinase genes.</title>
        <authorList>
            <person name="Copping V.M.S."/>
            <person name="Barelle C.J."/>
            <person name="Hube B."/>
            <person name="Gow N.A.R."/>
            <person name="Brown A.J.P."/>
            <person name="Odds F.C."/>
        </authorList>
    </citation>
    <scope>INDUCTION</scope>
</reference>
<keyword id="KW-0012">Acyltransferase</keyword>
<keyword id="KW-0963">Cytoplasm</keyword>
<keyword id="KW-0444">Lipid biosynthesis</keyword>
<keyword id="KW-0443">Lipid metabolism</keyword>
<keyword id="KW-0479">Metal-binding</keyword>
<keyword id="KW-0630">Potassium</keyword>
<keyword id="KW-1185">Reference proteome</keyword>
<keyword id="KW-0752">Steroid biosynthesis</keyword>
<keyword id="KW-0808">Transferase</keyword>
<name>ERG10_CANAL</name>
<comment type="function">
    <text evidence="2 10">Acetyl-CoA acetyltransferase; part of the first module of ergosterol biosynthesis pathway that includes the early steps of the pathway, conserved across all eukaryotes, and which results in the formation of mevalonate from acetyl-coenzyme A (acetyl-CoA) (By similarity). ERG10 catalyzes the formation of acetoacetyl-CoA from acetyl-CoA (By similarity). The first module starts with the action of the cytosolic acetyl-CoA acetyltransferase ERG10 that catalyzes the formation of acetoacetyl-CoA. The hydroxymethylglutaryl-CoA synthase ERG13 then condenses acetyl-CoA with acetoacetyl-CoA to form HMG-CoA. The 3-hydroxy-3-methylglutaryl-coenzyme A (HMG-CoA) reductase HMG1 finally reduces HMG-CoA to produce mevalonate (Probable).</text>
</comment>
<comment type="catalytic activity">
    <reaction evidence="2">
        <text>2 acetyl-CoA = acetoacetyl-CoA + CoA</text>
        <dbReference type="Rhea" id="RHEA:21036"/>
        <dbReference type="ChEBI" id="CHEBI:57286"/>
        <dbReference type="ChEBI" id="CHEBI:57287"/>
        <dbReference type="ChEBI" id="CHEBI:57288"/>
        <dbReference type="EC" id="2.3.1.9"/>
    </reaction>
    <physiologicalReaction direction="left-to-right" evidence="2">
        <dbReference type="Rhea" id="RHEA:21037"/>
    </physiologicalReaction>
</comment>
<comment type="pathway">
    <text evidence="2">Metabolic intermediate biosynthesis; (R)-mevalonate biosynthesis; (R)-mevalonate from acetyl-CoA: step 1/3.</text>
</comment>
<comment type="subunit">
    <text evidence="2">Homotetramer.</text>
</comment>
<comment type="subcellular location">
    <subcellularLocation>
        <location evidence="2">Cytoplasm</location>
        <location evidence="2">Cytosol</location>
    </subcellularLocation>
</comment>
<comment type="induction">
    <text evidence="4 5 6">Expression is up-regulated in azole resistant clinical isolates (PubMed:15215138). Expression is induced by exposure to arole antifungals such as fluconazole, ketoconazole or itraconazole (PubMed:11353609, PubMed:15820985).</text>
</comment>
<comment type="similarity">
    <text evidence="9">Belongs to the thiolase-like superfamily. Thiolase family.</text>
</comment>
<gene>
    <name evidence="7" type="primary">ERG10</name>
    <name evidence="8" type="synonym">POT14</name>
    <name type="ordered locus">orf19.1591</name>
    <name type="ORF">CAALFM_C204310WA</name>
</gene>
<evidence type="ECO:0000250" key="1">
    <source>
        <dbReference type="UniProtKB" id="P24752"/>
    </source>
</evidence>
<evidence type="ECO:0000250" key="2">
    <source>
        <dbReference type="UniProtKB" id="P41338"/>
    </source>
</evidence>
<evidence type="ECO:0000255" key="3">
    <source>
        <dbReference type="PROSITE-ProRule" id="PRU10020"/>
    </source>
</evidence>
<evidence type="ECO:0000269" key="4">
    <source>
    </source>
</evidence>
<evidence type="ECO:0000269" key="5">
    <source>
    </source>
</evidence>
<evidence type="ECO:0000269" key="6">
    <source>
    </source>
</evidence>
<evidence type="ECO:0000303" key="7">
    <source>
    </source>
</evidence>
<evidence type="ECO:0000303" key="8">
    <source>
    </source>
</evidence>
<evidence type="ECO:0000305" key="9"/>
<evidence type="ECO:0000305" key="10">
    <source>
    </source>
</evidence>
<feature type="chain" id="PRO_0000454163" description="Acetyl-CoA acetyltransferase">
    <location>
        <begin position="1"/>
        <end position="402"/>
    </location>
</feature>
<feature type="active site" description="Acyl-thioester intermediate" evidence="1">
    <location>
        <position position="90"/>
    </location>
</feature>
<feature type="active site" description="Proton acceptor" evidence="3">
    <location>
        <position position="352"/>
    </location>
</feature>
<feature type="active site" description="Proton acceptor" evidence="3">
    <location>
        <position position="382"/>
    </location>
</feature>
<feature type="binding site" evidence="1">
    <location>
        <position position="185"/>
    </location>
    <ligand>
        <name>CoA</name>
        <dbReference type="ChEBI" id="CHEBI:57287"/>
    </ligand>
</feature>
<feature type="binding site" evidence="1">
    <location>
        <position position="185"/>
    </location>
    <ligand>
        <name>K(+)</name>
        <dbReference type="ChEBI" id="CHEBI:29103"/>
    </ligand>
</feature>
<feature type="binding site" evidence="1">
    <location>
        <position position="230"/>
    </location>
    <ligand>
        <name>CoA</name>
        <dbReference type="ChEBI" id="CHEBI:57287"/>
    </ligand>
</feature>
<feature type="binding site" evidence="1">
    <location>
        <position position="250"/>
    </location>
    <ligand>
        <name>K(+)</name>
        <dbReference type="ChEBI" id="CHEBI:29103"/>
    </ligand>
</feature>
<feature type="binding site" evidence="1">
    <location>
        <position position="251"/>
    </location>
    <ligand>
        <name>CoA</name>
        <dbReference type="ChEBI" id="CHEBI:57287"/>
    </ligand>
</feature>
<feature type="binding site" evidence="1">
    <location>
        <position position="348"/>
    </location>
    <ligand>
        <name>K(+)</name>
        <dbReference type="ChEBI" id="CHEBI:29103"/>
    </ligand>
</feature>
<protein>
    <recommendedName>
        <fullName evidence="7">Acetyl-CoA acetyltransferase</fullName>
        <ecNumber evidence="2">2.3.1.9</ecNumber>
    </recommendedName>
    <alternativeName>
        <fullName evidence="7">Acetoacetyl-CoA thiolase</fullName>
    </alternativeName>
    <alternativeName>
        <fullName evidence="7">Ergosterol biosynthesis protein 10</fullName>
    </alternativeName>
</protein>